<protein>
    <recommendedName>
        <fullName>Intermediate transcription factor 3 small subunit</fullName>
    </recommendedName>
    <alternativeName>
        <fullName>VITF-3 32 kDa subunit</fullName>
    </alternativeName>
    <alternativeName>
        <fullName>VITF-3 small subunit</fullName>
    </alternativeName>
</protein>
<organismHost>
    <name type="scientific">Bos taurus</name>
    <name type="common">Bovine</name>
    <dbReference type="NCBI Taxonomy" id="9913"/>
</organismHost>
<accession>P68720</accession>
<accession>O57221</accession>
<accession>Q80HV9</accession>
<keyword id="KW-0010">Activator</keyword>
<keyword id="KW-0244">Early protein</keyword>
<keyword id="KW-1185">Reference proteome</keyword>
<keyword id="KW-0804">Transcription</keyword>
<keyword id="KW-0805">Transcription regulation</keyword>
<feature type="chain" id="PRO_0000099192" description="Intermediate transcription factor 3 small subunit">
    <location>
        <begin position="1"/>
        <end position="288"/>
    </location>
</feature>
<organism>
    <name type="scientific">Vaccinia virus (strain Western Reserve)</name>
    <name type="common">VACV</name>
    <name type="synonym">Vaccinia virus (strain WR)</name>
    <dbReference type="NCBI Taxonomy" id="10254"/>
    <lineage>
        <taxon>Viruses</taxon>
        <taxon>Varidnaviria</taxon>
        <taxon>Bamfordvirae</taxon>
        <taxon>Nucleocytoviricota</taxon>
        <taxon>Pokkesviricetes</taxon>
        <taxon>Chitovirales</taxon>
        <taxon>Poxviridae</taxon>
        <taxon>Chordopoxvirinae</taxon>
        <taxon>Orthopoxvirus</taxon>
        <taxon>Vaccinia virus</taxon>
    </lineage>
</organism>
<reference key="1">
    <citation type="submission" date="2003-02" db="EMBL/GenBank/DDBJ databases">
        <title>Sequencing of the coding region of Vaccinia-WR to an average 9-fold redundancy and an error rate of 0.16/10kb.</title>
        <authorList>
            <person name="Esposito J.J."/>
            <person name="Frace A.M."/>
            <person name="Sammons S.A."/>
            <person name="Olsen-Rasmussen M."/>
            <person name="Osborne J."/>
            <person name="Wohlhueter R."/>
        </authorList>
    </citation>
    <scope>NUCLEOTIDE SEQUENCE [LARGE SCALE GENOMIC DNA]</scope>
</reference>
<reference key="2">
    <citation type="journal article" date="1999" name="Proc. Natl. Acad. Sci. U.S.A.">
        <title>Identification of a transcription factor, encoded by two vaccinia virus early genes, that regulates the intermediate stage of viral gene expression.</title>
        <authorList>
            <person name="Sanz P."/>
            <person name="Moss B."/>
        </authorList>
    </citation>
    <scope>FUNCTION</scope>
    <scope>SUBUNIT</scope>
</reference>
<reference key="3">
    <citation type="journal article" date="2004" name="J. Biol. Chem.">
        <title>Vaccinia virus intermediate stage transcription is complemented by Ras-GTPase-activating protein SH3 domain-binding protein (G3BP) and cytoplasmic activation/proliferation-associated protein (p137) individually or as a heterodimer.</title>
        <authorList>
            <person name="Katsafanas G.C."/>
            <person name="Moss B."/>
        </authorList>
    </citation>
    <scope>FUNCTION</scope>
    <scope>INDUCTION</scope>
</reference>
<name>VTF3S_VACCW</name>
<dbReference type="EMBL" id="AY243312">
    <property type="protein sequence ID" value="AAO89406.1"/>
    <property type="molecule type" value="Genomic_DNA"/>
</dbReference>
<dbReference type="PIR" id="T37395">
    <property type="entry name" value="T37395"/>
</dbReference>
<dbReference type="RefSeq" id="YP_233009.1">
    <property type="nucleotide sequence ID" value="NC_006998.1"/>
</dbReference>
<dbReference type="SMR" id="P68720"/>
<dbReference type="DNASU" id="3707525"/>
<dbReference type="GeneID" id="3707525"/>
<dbReference type="KEGG" id="vg:3707525"/>
<dbReference type="Proteomes" id="UP000000344">
    <property type="component" value="Genome"/>
</dbReference>
<dbReference type="GO" id="GO:0039695">
    <property type="term" value="P:DNA-templated viral transcription"/>
    <property type="evidence" value="ECO:0000314"/>
    <property type="project" value="UniProtKB"/>
</dbReference>
<dbReference type="InterPro" id="IPR006834">
    <property type="entry name" value="Pox_A8"/>
</dbReference>
<dbReference type="Pfam" id="PF04745">
    <property type="entry name" value="Pox_A8"/>
    <property type="match status" value="1"/>
</dbReference>
<evidence type="ECO:0000269" key="1">
    <source>
    </source>
</evidence>
<evidence type="ECO:0000269" key="2">
    <source>
    </source>
</evidence>
<evidence type="ECO:0000305" key="3"/>
<sequence length="288" mass="33575">MFEPVPDLNLEASVELGEVNIDQTTPMIKENSGFISRSRRLFAHRSKDDERKLALRFFLQRLYFLDHREIHYLFRCVDAVKDVTITKKNNIIVAPYIALLTIASKGCKLTETMIEAFFPELYNEHSKKFKFNSQVSIIQEKLGYQFGNYHVYDFEPYYSTVALAIRDEHSSGIFNIRQESYLVSSLSEITYRFYLINLKSDLVQWSASTGAVINQMVNTVLITVYEKLQLVIENDSQFTCSLAVESKLPIKLLKDRNELFTKFINELKKTSSFKISKRDKDTLLKYFT</sequence>
<proteinExistence type="evidence at protein level"/>
<gene>
    <name type="primary">OPG134</name>
    <name type="synonym">VITF3S</name>
    <name type="ordered locus">VACWR127</name>
    <name type="ORF">A8R</name>
</gene>
<comment type="function">
    <text evidence="1 2">Acts with RNA polymerase to initiate transcription from intermediate gene promoters.</text>
</comment>
<comment type="subunit">
    <text evidence="1">Heterodimer of a 45 kDa (A23R) and a 32 kDa (A8R) subunit to form the virus intermediate transcription factor (VITF)-3.</text>
</comment>
<comment type="induction">
    <text evidence="2">Expressed in the early phase of the viral replicative cycle.</text>
</comment>
<comment type="similarity">
    <text evidence="3">Belongs to the orthopoxvirus OPG134 family.</text>
</comment>